<proteinExistence type="evidence at transcript level"/>
<organism>
    <name type="scientific">Mus musculus</name>
    <name type="common">Mouse</name>
    <dbReference type="NCBI Taxonomy" id="10090"/>
    <lineage>
        <taxon>Eukaryota</taxon>
        <taxon>Metazoa</taxon>
        <taxon>Chordata</taxon>
        <taxon>Craniata</taxon>
        <taxon>Vertebrata</taxon>
        <taxon>Euteleostomi</taxon>
        <taxon>Mammalia</taxon>
        <taxon>Eutheria</taxon>
        <taxon>Euarchontoglires</taxon>
        <taxon>Glires</taxon>
        <taxon>Rodentia</taxon>
        <taxon>Myomorpha</taxon>
        <taxon>Muroidea</taxon>
        <taxon>Muridae</taxon>
        <taxon>Murinae</taxon>
        <taxon>Mus</taxon>
        <taxon>Mus</taxon>
    </lineage>
</organism>
<feature type="chain" id="PRO_0000056085" description="E3 ubiquitin-protein ligase RNF103">
    <location>
        <begin position="1"/>
        <end position="683"/>
    </location>
</feature>
<feature type="transmembrane region" description="Helical" evidence="2">
    <location>
        <begin position="6"/>
        <end position="26"/>
    </location>
</feature>
<feature type="transmembrane region" description="Helical" evidence="2">
    <location>
        <begin position="326"/>
        <end position="346"/>
    </location>
</feature>
<feature type="transmembrane region" description="Helical" evidence="2">
    <location>
        <begin position="366"/>
        <end position="386"/>
    </location>
</feature>
<feature type="transmembrane region" description="Helical" evidence="2">
    <location>
        <begin position="411"/>
        <end position="431"/>
    </location>
</feature>
<feature type="zinc finger region" description="RING-type" evidence="3">
    <location>
        <begin position="619"/>
        <end position="661"/>
    </location>
</feature>
<feature type="region of interest" description="Disordered" evidence="4">
    <location>
        <begin position="525"/>
        <end position="548"/>
    </location>
</feature>
<feature type="compositionally biased region" description="Acidic residues" evidence="4">
    <location>
        <begin position="525"/>
        <end position="542"/>
    </location>
</feature>
<feature type="sequence conflict" description="In Ref. 1; BAA19795." evidence="6" ref="1">
    <original>E</original>
    <variation>V</variation>
    <location>
        <position position="70"/>
    </location>
</feature>
<feature type="sequence conflict" description="In Ref. 1; BAA19795 and 2; BAA34912." evidence="6" ref="1 2">
    <original>D</original>
    <variation>E</variation>
    <location>
        <position position="388"/>
    </location>
</feature>
<feature type="sequence conflict" description="In Ref. 1; BAA19795 and 2; BAA34912." evidence="6" ref="1 2">
    <original>T</original>
    <variation>S</variation>
    <location>
        <position position="414"/>
    </location>
</feature>
<comment type="function">
    <text evidence="1">Acts as an E2-dependent E3 ubiquitin-protein ligase, probably involved in the ER-associated protein degradation pathway.</text>
</comment>
<comment type="catalytic activity">
    <reaction>
        <text>S-ubiquitinyl-[E2 ubiquitin-conjugating enzyme]-L-cysteine + [acceptor protein]-L-lysine = [E2 ubiquitin-conjugating enzyme]-L-cysteine + N(6)-ubiquitinyl-[acceptor protein]-L-lysine.</text>
        <dbReference type="EC" id="2.3.2.27"/>
    </reaction>
</comment>
<comment type="pathway">
    <text>Protein modification; protein ubiquitination.</text>
</comment>
<comment type="subunit">
    <text evidence="1">Interacts with DERL1 and VCP.</text>
</comment>
<comment type="subcellular location">
    <subcellularLocation>
        <location evidence="1">Endoplasmic reticulum membrane</location>
        <topology evidence="1">Multi-pass membrane protein</topology>
    </subcellularLocation>
</comment>
<comment type="tissue specificity">
    <text evidence="5">Highly expressed in the normal cerebellum but not in the cerebral cortex.</text>
</comment>
<accession>Q9R1W3</accession>
<accession>B9EHC2</accession>
<accession>O08670</accession>
<accession>O08883</accession>
<evidence type="ECO:0000250" key="1">
    <source>
        <dbReference type="UniProtKB" id="O00237"/>
    </source>
</evidence>
<evidence type="ECO:0000255" key="2"/>
<evidence type="ECO:0000255" key="3">
    <source>
        <dbReference type="PROSITE-ProRule" id="PRU00175"/>
    </source>
</evidence>
<evidence type="ECO:0000256" key="4">
    <source>
        <dbReference type="SAM" id="MobiDB-lite"/>
    </source>
</evidence>
<evidence type="ECO:0000269" key="5">
    <source>
    </source>
</evidence>
<evidence type="ECO:0000305" key="6"/>
<name>RN103_MOUSE</name>
<reference key="1">
    <citation type="journal article" date="1997" name="Biochem. Biophys. Res. Commun.">
        <title>Cloning of human and mouse cDNAs encoding novel zinc finger proteins expressed in cerebellum and hippocampus.</title>
        <authorList>
            <person name="Yasojima K."/>
            <person name="Tsujimura A."/>
            <person name="Mizuno T."/>
            <person name="Shigeyoshi Y."/>
            <person name="Inazawa J."/>
            <person name="Kikuno R."/>
            <person name="Kuma K."/>
            <person name="Ohkubo K."/>
            <person name="Hosokawa Y."/>
            <person name="Ibata Y."/>
            <person name="Abe T."/>
            <person name="Miyata T."/>
            <person name="Matsubara K."/>
            <person name="Nakajima K."/>
            <person name="Hashimoto-Gotoh T."/>
        </authorList>
    </citation>
    <scope>NUCLEOTIDE SEQUENCE [MRNA]</scope>
    <scope>TISSUE SPECIFICITY</scope>
    <source>
        <tissue>Brain</tissue>
    </source>
</reference>
<reference key="2">
    <citation type="submission" date="2000-12" db="EMBL/GenBank/DDBJ databases">
        <title>Structure of mouse KF-1 genomic DNA.</title>
        <authorList>
            <person name="Tsujimura A."/>
            <person name="Hashimoto-Gotoh T."/>
        </authorList>
    </citation>
    <scope>NUCLEOTIDE SEQUENCE [GENOMIC DNA]</scope>
    <source>
        <strain>129/SvJ</strain>
        <tissue>Brain</tissue>
    </source>
</reference>
<reference key="3">
    <citation type="journal article" date="2004" name="Genome Res.">
        <title>The status, quality, and expansion of the NIH full-length cDNA project: the Mammalian Gene Collection (MGC).</title>
        <authorList>
            <consortium name="The MGC Project Team"/>
        </authorList>
    </citation>
    <scope>NUCLEOTIDE SEQUENCE [LARGE SCALE MRNA]</scope>
    <source>
        <tissue>Brain</tissue>
    </source>
</reference>
<keyword id="KW-0256">Endoplasmic reticulum</keyword>
<keyword id="KW-0472">Membrane</keyword>
<keyword id="KW-0479">Metal-binding</keyword>
<keyword id="KW-1185">Reference proteome</keyword>
<keyword id="KW-0808">Transferase</keyword>
<keyword id="KW-0812">Transmembrane</keyword>
<keyword id="KW-1133">Transmembrane helix</keyword>
<keyword id="KW-0833">Ubl conjugation pathway</keyword>
<keyword id="KW-0862">Zinc</keyword>
<keyword id="KW-0863">Zinc-finger</keyword>
<gene>
    <name type="primary">Rnf103</name>
    <name type="synonym">Zfp103</name>
</gene>
<dbReference type="EC" id="2.3.2.27"/>
<dbReference type="EMBL" id="D76445">
    <property type="protein sequence ID" value="BAA19795.1"/>
    <property type="molecule type" value="mRNA"/>
</dbReference>
<dbReference type="EMBL" id="AB012161">
    <property type="protein sequence ID" value="BAA34912.2"/>
    <property type="molecule type" value="Genomic_DNA"/>
</dbReference>
<dbReference type="EMBL" id="BC137624">
    <property type="protein sequence ID" value="AAI37625.1"/>
    <property type="molecule type" value="mRNA"/>
</dbReference>
<dbReference type="CCDS" id="CCDS39508.1"/>
<dbReference type="PIR" id="JC5393">
    <property type="entry name" value="JC5393"/>
</dbReference>
<dbReference type="RefSeq" id="NP_033569.2">
    <property type="nucleotide sequence ID" value="NM_009543.4"/>
</dbReference>
<dbReference type="SMR" id="Q9R1W3"/>
<dbReference type="BioGRID" id="204633">
    <property type="interactions" value="1"/>
</dbReference>
<dbReference type="FunCoup" id="Q9R1W3">
    <property type="interactions" value="1065"/>
</dbReference>
<dbReference type="STRING" id="10090.ENSMUSP00000066324"/>
<dbReference type="GlyGen" id="Q9R1W3">
    <property type="glycosylation" value="2 sites, 2 N-linked glycans (2 sites)"/>
</dbReference>
<dbReference type="iPTMnet" id="Q9R1W3"/>
<dbReference type="PhosphoSitePlus" id="Q9R1W3"/>
<dbReference type="PaxDb" id="10090-ENSMUSP00000066324"/>
<dbReference type="ProteomicsDB" id="299839"/>
<dbReference type="Antibodypedia" id="34817">
    <property type="antibodies" value="122 antibodies from 21 providers"/>
</dbReference>
<dbReference type="DNASU" id="22644"/>
<dbReference type="Ensembl" id="ENSMUST00000064637.11">
    <property type="protein sequence ID" value="ENSMUSP00000066324.5"/>
    <property type="gene ID" value="ENSMUSG00000052656.14"/>
</dbReference>
<dbReference type="GeneID" id="22644"/>
<dbReference type="KEGG" id="mmu:22644"/>
<dbReference type="UCSC" id="uc009cgv.1">
    <property type="organism name" value="mouse"/>
</dbReference>
<dbReference type="AGR" id="MGI:109483"/>
<dbReference type="CTD" id="7844"/>
<dbReference type="MGI" id="MGI:109483">
    <property type="gene designation" value="Rnf103"/>
</dbReference>
<dbReference type="VEuPathDB" id="HostDB:ENSMUSG00000052656"/>
<dbReference type="eggNOG" id="KOG0800">
    <property type="taxonomic scope" value="Eukaryota"/>
</dbReference>
<dbReference type="GeneTree" id="ENSGT00390000006413"/>
<dbReference type="HOGENOM" id="CLU_031351_0_0_1"/>
<dbReference type="InParanoid" id="Q9R1W3"/>
<dbReference type="OMA" id="PDWLAWP"/>
<dbReference type="OrthoDB" id="8062037at2759"/>
<dbReference type="PhylomeDB" id="Q9R1W3"/>
<dbReference type="TreeFam" id="TF329229"/>
<dbReference type="UniPathway" id="UPA00143"/>
<dbReference type="BioGRID-ORCS" id="22644">
    <property type="hits" value="1 hit in 80 CRISPR screens"/>
</dbReference>
<dbReference type="ChiTaRS" id="Rnf103">
    <property type="organism name" value="mouse"/>
</dbReference>
<dbReference type="PRO" id="PR:Q9R1W3"/>
<dbReference type="Proteomes" id="UP000000589">
    <property type="component" value="Chromosome 6"/>
</dbReference>
<dbReference type="RNAct" id="Q9R1W3">
    <property type="molecule type" value="protein"/>
</dbReference>
<dbReference type="Bgee" id="ENSMUSG00000052656">
    <property type="expression patterns" value="Expressed in metanephric proximal tubule and 252 other cell types or tissues"/>
</dbReference>
<dbReference type="ExpressionAtlas" id="Q9R1W3">
    <property type="expression patterns" value="baseline and differential"/>
</dbReference>
<dbReference type="GO" id="GO:0005783">
    <property type="term" value="C:endoplasmic reticulum"/>
    <property type="evidence" value="ECO:0000250"/>
    <property type="project" value="UniProtKB"/>
</dbReference>
<dbReference type="GO" id="GO:0005789">
    <property type="term" value="C:endoplasmic reticulum membrane"/>
    <property type="evidence" value="ECO:0007669"/>
    <property type="project" value="UniProtKB-SubCell"/>
</dbReference>
<dbReference type="GO" id="GO:0004842">
    <property type="term" value="F:ubiquitin-protein transferase activity"/>
    <property type="evidence" value="ECO:0000250"/>
    <property type="project" value="UniProtKB"/>
</dbReference>
<dbReference type="GO" id="GO:0008270">
    <property type="term" value="F:zinc ion binding"/>
    <property type="evidence" value="ECO:0007669"/>
    <property type="project" value="UniProtKB-KW"/>
</dbReference>
<dbReference type="GO" id="GO:0036503">
    <property type="term" value="P:ERAD pathway"/>
    <property type="evidence" value="ECO:0007669"/>
    <property type="project" value="Ensembl"/>
</dbReference>
<dbReference type="GO" id="GO:0016567">
    <property type="term" value="P:protein ubiquitination"/>
    <property type="evidence" value="ECO:0000250"/>
    <property type="project" value="UniProtKB"/>
</dbReference>
<dbReference type="CDD" id="cd16473">
    <property type="entry name" value="RING-H2_RNF103"/>
    <property type="match status" value="1"/>
</dbReference>
<dbReference type="Gene3D" id="3.30.40.10">
    <property type="entry name" value="Zinc/RING finger domain, C3HC4 (zinc finger)"/>
    <property type="match status" value="1"/>
</dbReference>
<dbReference type="InterPro" id="IPR042494">
    <property type="entry name" value="RNF103"/>
</dbReference>
<dbReference type="InterPro" id="IPR001841">
    <property type="entry name" value="Znf_RING"/>
</dbReference>
<dbReference type="InterPro" id="IPR013083">
    <property type="entry name" value="Znf_RING/FYVE/PHD"/>
</dbReference>
<dbReference type="PANTHER" id="PTHR15302">
    <property type="entry name" value="E3 UBIQUITIN-PROTEIN LIGASE RNF103"/>
    <property type="match status" value="1"/>
</dbReference>
<dbReference type="PANTHER" id="PTHR15302:SF0">
    <property type="entry name" value="E3 UBIQUITIN-PROTEIN LIGASE RNF103"/>
    <property type="match status" value="1"/>
</dbReference>
<dbReference type="Pfam" id="PF13639">
    <property type="entry name" value="zf-RING_2"/>
    <property type="match status" value="1"/>
</dbReference>
<dbReference type="SMART" id="SM00184">
    <property type="entry name" value="RING"/>
    <property type="match status" value="1"/>
</dbReference>
<dbReference type="SUPFAM" id="SSF57850">
    <property type="entry name" value="RING/U-box"/>
    <property type="match status" value="1"/>
</dbReference>
<dbReference type="PROSITE" id="PS50089">
    <property type="entry name" value="ZF_RING_2"/>
    <property type="match status" value="1"/>
</dbReference>
<protein>
    <recommendedName>
        <fullName>E3 ubiquitin-protein ligase RNF103</fullName>
        <ecNumber>2.3.2.27</ecNumber>
    </recommendedName>
    <alternativeName>
        <fullName>KF-1</fullName>
        <shortName>mKF-1</shortName>
    </alternativeName>
    <alternativeName>
        <fullName>RING finger protein 103</fullName>
    </alternativeName>
    <alternativeName>
        <fullName evidence="6">RING-type E3 ubiquitin transferase RNF103</fullName>
    </alternativeName>
    <alternativeName>
        <fullName>Zinc finger protein 103</fullName>
        <shortName>Zfp-103</shortName>
    </alternativeName>
</protein>
<sequence>MWLKLFFLLLYFLVLFVLARFFEAIVWYETGIFATQLVDPVALSFKKLKTILECRGLGYSGLPEKKDVRELVEKSGDLMEGELYSALKEEEASESVSSTNFSGEMHFYELVEDTKDGIWLVQVIANDRSPLVGKIHWEKMVKKVSRFGIRTGTFNCSSDPRYCRRRGWVRSTLIMSVPQTSTSKGKVMLKEYSGRKIEVEHIFKWITAHAASRIKTIYNVEHLKEEWNKSDQYWVKIYLFANLDQPPAFFSALSIKFTGRVEFIFVNVENWNNKSYMTDIGIYNMPSYILRTPEGIYRYGNHTGEFISLQAMDSFLRSLQPEVNDLFVLSLVLVNLMAWMDLFITQGATIKRFVVLISTLGTYNSLLIISWLPVLGFLQLPYLDSFYDYSLRLLRYSNTTTLASWVRADWMFYTSHPALFLSTYLGHGLLIDYFEKKRRRSNNDEVNANNLEWLSSLWDWYTSYLFHPIASFQNFPVDSDWDEDPDLFLERLAFPDLWLHPLIPTDYIKNLPMWRFKCLGVQSEEEMSESSQDTENDSDSDNMDTFSSSKDIFEDKQSVVHSSPGRTSHCDTEACSCANKCESSPCERKRRSYGSHNTDEDMEPDWLTWPAGTLHCTECVVCLENFENGCLLMGLPCGHVFHQNCIVMWLAGGRHCCPVCRWPSYKKKQPYAQQQPLSNDVPS</sequence>